<dbReference type="EC" id="3.6.4.-" evidence="1"/>
<dbReference type="EMBL" id="X04370">
    <property type="protein sequence ID" value="CAA27938.1"/>
    <property type="molecule type" value="Genomic_DNA"/>
</dbReference>
<dbReference type="PIR" id="C27215">
    <property type="entry name" value="WZBE55"/>
</dbReference>
<dbReference type="Proteomes" id="UP000002602">
    <property type="component" value="Genome"/>
</dbReference>
<dbReference type="GO" id="GO:0042025">
    <property type="term" value="C:host cell nucleus"/>
    <property type="evidence" value="ECO:0007669"/>
    <property type="project" value="UniProtKB-SubCell"/>
</dbReference>
<dbReference type="GO" id="GO:0005524">
    <property type="term" value="F:ATP binding"/>
    <property type="evidence" value="ECO:0007669"/>
    <property type="project" value="UniProtKB-KW"/>
</dbReference>
<dbReference type="GO" id="GO:0004386">
    <property type="term" value="F:helicase activity"/>
    <property type="evidence" value="ECO:0007669"/>
    <property type="project" value="UniProtKB-KW"/>
</dbReference>
<dbReference type="GO" id="GO:0016787">
    <property type="term" value="F:hydrolase activity"/>
    <property type="evidence" value="ECO:0007669"/>
    <property type="project" value="UniProtKB-KW"/>
</dbReference>
<dbReference type="GO" id="GO:0006260">
    <property type="term" value="P:DNA replication"/>
    <property type="evidence" value="ECO:0007669"/>
    <property type="project" value="UniProtKB-KW"/>
</dbReference>
<dbReference type="Gene3D" id="3.40.50.300">
    <property type="entry name" value="P-loop containing nucleotide triphosphate hydrolases"/>
    <property type="match status" value="1"/>
</dbReference>
<dbReference type="HAMAP" id="MF_04030">
    <property type="entry name" value="HSV_HELI"/>
    <property type="match status" value="1"/>
</dbReference>
<dbReference type="InterPro" id="IPR003840">
    <property type="entry name" value="DNA_helicase_dom"/>
</dbReference>
<dbReference type="InterPro" id="IPR034711">
    <property type="entry name" value="HSV_HELI"/>
</dbReference>
<dbReference type="InterPro" id="IPR027417">
    <property type="entry name" value="P-loop_NTPase"/>
</dbReference>
<dbReference type="Pfam" id="PF02689">
    <property type="entry name" value="Herpes_Helicase"/>
    <property type="match status" value="1"/>
</dbReference>
<dbReference type="SUPFAM" id="SSF52540">
    <property type="entry name" value="P-loop containing nucleoside triphosphate hydrolases"/>
    <property type="match status" value="2"/>
</dbReference>
<sequence>MKRSISVDSSSPKNVFNPETPNGFDDSVYLNFTSMHSIQPILSRIRELAAITIPKERVPRLCWFKQLLELQAPPEMQRNELPFSVYLISGNAGSGKSTCIQTLNEAIDCIITGSTRVAAQNVHAKLSTAYASRPINTIFHEFGFRGNHIQAQLGRYAYNWTTTPPSIEDLQKRDIVYYWEVLIDITKRVFQMGDDGRGGTSTFKTLWAIERLLNKPTGSMSGTAFIACGSLPAFTRSNVIVIDEAGLLGRHILTAVVYCWWLLNAIYQSPQYINGRKPVIVCVGSPTQTDSLESHFQHDMQRSHVTPSENILTYIICNQTLRQYTNISHNWAIFINNKRCQEDDFGNLLKTLEYGLPITEAHARLVDTFVVPASYINNPANLPGWTRLYSSHKEVSAYMSKLHAHLKLSKNDHFSVFALPTYTFIRLTAFDEYRKLTGQPGLSVEHWIRANSGRLHNYSQSRDHDMGTVKYETHSNRDLIVARTDITYVLNSLVVVTTRLRKLVIGFSGTFQSFAKVLRDDSFVKARGETSIEYAYRFLSNLIFGGLINFYNFLLNKNLHPDKVSLAYKRLAALTLELLSGTNKAPLHEAAVNGAGAGIDCDGAATSADKAFCFTKAPESKVTASIPEDPDDVIFTALNDEVIDLVYCQYEFSYPKSSNEVHAQFLLMKAIYDGRYAILAELFESSFTTAPFSAYVDNVNFNGSELLIGNVRGGLLSLALQTDTYTLLGYTFAPVPVFVEELTRKKLYRETTEMLYALHVPLMVLQDQHGFVSIVNANVCEFTESIEDAELAMATTVDYGLSSKLAMTIARSQGLSLEKVAICFTADKLRLNSVYVAMSRTVSSRFLKMNLNPLRERYEKSAEISDHILAALRDPNVHVVY</sequence>
<organismHost>
    <name type="scientific">Homo sapiens</name>
    <name type="common">Human</name>
    <dbReference type="NCBI Taxonomy" id="9606"/>
</organismHost>
<comment type="function">
    <text evidence="1">Component of the helicase/primase complex. Unwinds the DNA at the replication forks and generates single-stranded DNA for both leading and lagging strand synthesis. The primase synthesizes short RNA primers on the lagging strand that the polymerase elongates using dNTPs. Possesses helicase-like motifs and therefore may act as the helicase subunit of the complex.</text>
</comment>
<comment type="subunit">
    <text evidence="1">Associates with the primase and the primase-associated factor to form the helicase-primase complex.</text>
</comment>
<comment type="subcellular location">
    <subcellularLocation>
        <location evidence="1">Host nucleus</location>
    </subcellularLocation>
</comment>
<comment type="similarity">
    <text evidence="1">Belongs to the herpesviridae helicase family.</text>
</comment>
<protein>
    <recommendedName>
        <fullName evidence="1">DNA replication helicase</fullName>
        <ecNumber evidence="1">3.6.4.-</ecNumber>
    </recommendedName>
</protein>
<organism>
    <name type="scientific">Varicella-zoster virus (strain Dumas)</name>
    <name type="common">HHV-3</name>
    <name type="synonym">Human herpesvirus 3</name>
    <dbReference type="NCBI Taxonomy" id="10338"/>
    <lineage>
        <taxon>Viruses</taxon>
        <taxon>Duplodnaviria</taxon>
        <taxon>Heunggongvirae</taxon>
        <taxon>Peploviricota</taxon>
        <taxon>Herviviricetes</taxon>
        <taxon>Herpesvirales</taxon>
        <taxon>Orthoherpesviridae</taxon>
        <taxon>Alphaherpesvirinae</taxon>
        <taxon>Varicellovirus</taxon>
        <taxon>Varicellovirus humanalpha3</taxon>
        <taxon>Human herpesvirus 3</taxon>
    </lineage>
</organism>
<reference key="1">
    <citation type="journal article" date="1986" name="J. Gen. Virol.">
        <title>The complete DNA sequence of varicella-zoster virus.</title>
        <authorList>
            <person name="Davison A.J."/>
            <person name="Scott J.E."/>
        </authorList>
    </citation>
    <scope>NUCLEOTIDE SEQUENCE [LARGE SCALE GENOMIC DNA]</scope>
</reference>
<proteinExistence type="inferred from homology"/>
<name>HELI_VZVD</name>
<keyword id="KW-0067">ATP-binding</keyword>
<keyword id="KW-0235">DNA replication</keyword>
<keyword id="KW-0347">Helicase</keyword>
<keyword id="KW-1048">Host nucleus</keyword>
<keyword id="KW-0378">Hydrolase</keyword>
<keyword id="KW-0547">Nucleotide-binding</keyword>
<keyword id="KW-1185">Reference proteome</keyword>
<evidence type="ECO:0000255" key="1">
    <source>
        <dbReference type="HAMAP-Rule" id="MF_04030"/>
    </source>
</evidence>
<feature type="chain" id="PRO_0000115852" description="DNA replication helicase">
    <location>
        <begin position="1"/>
        <end position="881"/>
    </location>
</feature>
<feature type="binding site" evidence="1">
    <location>
        <begin position="90"/>
        <end position="97"/>
    </location>
    <ligand>
        <name>ATP</name>
        <dbReference type="ChEBI" id="CHEBI:30616"/>
    </ligand>
</feature>
<accession>P09303</accession>
<gene>
    <name evidence="1" type="primary">HELI</name>
    <name type="ordered locus">ORF55</name>
</gene>